<name>RUVA_NOCFA</name>
<organism>
    <name type="scientific">Nocardia farcinica (strain IFM 10152)</name>
    <dbReference type="NCBI Taxonomy" id="247156"/>
    <lineage>
        <taxon>Bacteria</taxon>
        <taxon>Bacillati</taxon>
        <taxon>Actinomycetota</taxon>
        <taxon>Actinomycetes</taxon>
        <taxon>Mycobacteriales</taxon>
        <taxon>Nocardiaceae</taxon>
        <taxon>Nocardia</taxon>
    </lineage>
</organism>
<proteinExistence type="inferred from homology"/>
<comment type="function">
    <text evidence="1">The RuvA-RuvB-RuvC complex processes Holliday junction (HJ) DNA during genetic recombination and DNA repair, while the RuvA-RuvB complex plays an important role in the rescue of blocked DNA replication forks via replication fork reversal (RFR). RuvA specifically binds to HJ cruciform DNA, conferring on it an open structure. The RuvB hexamer acts as an ATP-dependent pump, pulling dsDNA into and through the RuvAB complex. HJ branch migration allows RuvC to scan DNA until it finds its consensus sequence, where it cleaves and resolves the cruciform DNA.</text>
</comment>
<comment type="subunit">
    <text evidence="1">Homotetramer. Forms an RuvA(8)-RuvB(12)-Holliday junction (HJ) complex. HJ DNA is sandwiched between 2 RuvA tetramers; dsDNA enters through RuvA and exits via RuvB. An RuvB hexamer assembles on each DNA strand where it exits the tetramer. Each RuvB hexamer is contacted by two RuvA subunits (via domain III) on 2 adjacent RuvB subunits; this complex drives branch migration. In the full resolvosome a probable DNA-RuvA(4)-RuvB(12)-RuvC(2) complex forms which resolves the HJ.</text>
</comment>
<comment type="subcellular location">
    <subcellularLocation>
        <location evidence="1">Cytoplasm</location>
    </subcellularLocation>
</comment>
<comment type="domain">
    <text evidence="1">Has three domains with a flexible linker between the domains II and III and assumes an 'L' shape. Domain III is highly mobile and contacts RuvB.</text>
</comment>
<comment type="similarity">
    <text evidence="1">Belongs to the RuvA family.</text>
</comment>
<feature type="chain" id="PRO_0000224887" description="Holliday junction branch migration complex subunit RuvA">
    <location>
        <begin position="1"/>
        <end position="201"/>
    </location>
</feature>
<feature type="region of interest" description="Domain I" evidence="1">
    <location>
        <begin position="1"/>
        <end position="63"/>
    </location>
</feature>
<feature type="region of interest" description="Domain II" evidence="1">
    <location>
        <begin position="64"/>
        <end position="142"/>
    </location>
</feature>
<feature type="region of interest" description="Flexible linker" evidence="1">
    <location>
        <begin position="143"/>
        <end position="153"/>
    </location>
</feature>
<feature type="region of interest" description="Domain III" evidence="1">
    <location>
        <begin position="153"/>
        <end position="201"/>
    </location>
</feature>
<protein>
    <recommendedName>
        <fullName evidence="1">Holliday junction branch migration complex subunit RuvA</fullName>
    </recommendedName>
</protein>
<dbReference type="EMBL" id="AP006618">
    <property type="protein sequence ID" value="BAD58544.1"/>
    <property type="molecule type" value="Genomic_DNA"/>
</dbReference>
<dbReference type="RefSeq" id="WP_011210229.1">
    <property type="nucleotide sequence ID" value="NC_006361.1"/>
</dbReference>
<dbReference type="SMR" id="Q5YTE7"/>
<dbReference type="STRING" id="247156.NFA_36960"/>
<dbReference type="GeneID" id="61134389"/>
<dbReference type="KEGG" id="nfa:NFA_36960"/>
<dbReference type="eggNOG" id="COG0632">
    <property type="taxonomic scope" value="Bacteria"/>
</dbReference>
<dbReference type="HOGENOM" id="CLU_087936_2_1_11"/>
<dbReference type="OrthoDB" id="5293449at2"/>
<dbReference type="Proteomes" id="UP000006820">
    <property type="component" value="Chromosome"/>
</dbReference>
<dbReference type="GO" id="GO:0005737">
    <property type="term" value="C:cytoplasm"/>
    <property type="evidence" value="ECO:0007669"/>
    <property type="project" value="UniProtKB-SubCell"/>
</dbReference>
<dbReference type="GO" id="GO:0009379">
    <property type="term" value="C:Holliday junction helicase complex"/>
    <property type="evidence" value="ECO:0007669"/>
    <property type="project" value="InterPro"/>
</dbReference>
<dbReference type="GO" id="GO:0048476">
    <property type="term" value="C:Holliday junction resolvase complex"/>
    <property type="evidence" value="ECO:0007669"/>
    <property type="project" value="UniProtKB-UniRule"/>
</dbReference>
<dbReference type="GO" id="GO:0005524">
    <property type="term" value="F:ATP binding"/>
    <property type="evidence" value="ECO:0007669"/>
    <property type="project" value="InterPro"/>
</dbReference>
<dbReference type="GO" id="GO:0000400">
    <property type="term" value="F:four-way junction DNA binding"/>
    <property type="evidence" value="ECO:0007669"/>
    <property type="project" value="UniProtKB-UniRule"/>
</dbReference>
<dbReference type="GO" id="GO:0009378">
    <property type="term" value="F:four-way junction helicase activity"/>
    <property type="evidence" value="ECO:0007669"/>
    <property type="project" value="InterPro"/>
</dbReference>
<dbReference type="GO" id="GO:0006310">
    <property type="term" value="P:DNA recombination"/>
    <property type="evidence" value="ECO:0007669"/>
    <property type="project" value="UniProtKB-UniRule"/>
</dbReference>
<dbReference type="GO" id="GO:0006281">
    <property type="term" value="P:DNA repair"/>
    <property type="evidence" value="ECO:0007669"/>
    <property type="project" value="UniProtKB-UniRule"/>
</dbReference>
<dbReference type="CDD" id="cd14332">
    <property type="entry name" value="UBA_RuvA_C"/>
    <property type="match status" value="1"/>
</dbReference>
<dbReference type="FunFam" id="2.40.50.140:FF:000083">
    <property type="entry name" value="Holliday junction ATP-dependent DNA helicase RuvA"/>
    <property type="match status" value="1"/>
</dbReference>
<dbReference type="Gene3D" id="1.10.150.20">
    <property type="entry name" value="5' to 3' exonuclease, C-terminal subdomain"/>
    <property type="match status" value="1"/>
</dbReference>
<dbReference type="Gene3D" id="1.10.8.10">
    <property type="entry name" value="DNA helicase RuvA subunit, C-terminal domain"/>
    <property type="match status" value="1"/>
</dbReference>
<dbReference type="Gene3D" id="2.40.50.140">
    <property type="entry name" value="Nucleic acid-binding proteins"/>
    <property type="match status" value="1"/>
</dbReference>
<dbReference type="HAMAP" id="MF_00031">
    <property type="entry name" value="DNA_HJ_migration_RuvA"/>
    <property type="match status" value="1"/>
</dbReference>
<dbReference type="InterPro" id="IPR013849">
    <property type="entry name" value="DNA_helicase_Holl-junc_RuvA_I"/>
</dbReference>
<dbReference type="InterPro" id="IPR003583">
    <property type="entry name" value="Hlx-hairpin-Hlx_DNA-bd_motif"/>
</dbReference>
<dbReference type="InterPro" id="IPR012340">
    <property type="entry name" value="NA-bd_OB-fold"/>
</dbReference>
<dbReference type="InterPro" id="IPR000085">
    <property type="entry name" value="RuvA"/>
</dbReference>
<dbReference type="InterPro" id="IPR010994">
    <property type="entry name" value="RuvA_2-like"/>
</dbReference>
<dbReference type="InterPro" id="IPR011114">
    <property type="entry name" value="RuvA_C"/>
</dbReference>
<dbReference type="InterPro" id="IPR036267">
    <property type="entry name" value="RuvA_C_sf"/>
</dbReference>
<dbReference type="NCBIfam" id="TIGR00084">
    <property type="entry name" value="ruvA"/>
    <property type="match status" value="1"/>
</dbReference>
<dbReference type="Pfam" id="PF14520">
    <property type="entry name" value="HHH_5"/>
    <property type="match status" value="1"/>
</dbReference>
<dbReference type="Pfam" id="PF07499">
    <property type="entry name" value="RuvA_C"/>
    <property type="match status" value="1"/>
</dbReference>
<dbReference type="Pfam" id="PF01330">
    <property type="entry name" value="RuvA_N"/>
    <property type="match status" value="1"/>
</dbReference>
<dbReference type="SMART" id="SM00278">
    <property type="entry name" value="HhH1"/>
    <property type="match status" value="2"/>
</dbReference>
<dbReference type="SUPFAM" id="SSF46929">
    <property type="entry name" value="DNA helicase RuvA subunit, C-terminal domain"/>
    <property type="match status" value="1"/>
</dbReference>
<dbReference type="SUPFAM" id="SSF50249">
    <property type="entry name" value="Nucleic acid-binding proteins"/>
    <property type="match status" value="1"/>
</dbReference>
<dbReference type="SUPFAM" id="SSF47781">
    <property type="entry name" value="RuvA domain 2-like"/>
    <property type="match status" value="1"/>
</dbReference>
<gene>
    <name evidence="1" type="primary">ruvA</name>
    <name type="ordered locus">NFA_36960</name>
</gene>
<evidence type="ECO:0000255" key="1">
    <source>
        <dbReference type="HAMAP-Rule" id="MF_00031"/>
    </source>
</evidence>
<sequence length="201" mass="21021">MIASVRGEVLEIALDHVVVEAAGVGYRLNATPSTLATLTRGAEARLYTAMIVREDSMTLYGFADTEARDLFGLLQTVSGVGPRLAMAVLAVLEPEALRKALAESNVAALTRVPGIGKRGAERMVVELRDKVNLVPVQAGPPGSTPAVAATPVREQVVEALTGLGFPLKQAEQALDTVLAEQPAADTSTALRAALSLLGKNR</sequence>
<keyword id="KW-0963">Cytoplasm</keyword>
<keyword id="KW-0227">DNA damage</keyword>
<keyword id="KW-0233">DNA recombination</keyword>
<keyword id="KW-0234">DNA repair</keyword>
<keyword id="KW-0238">DNA-binding</keyword>
<keyword id="KW-1185">Reference proteome</keyword>
<accession>Q5YTE7</accession>
<reference key="1">
    <citation type="journal article" date="2004" name="Proc. Natl. Acad. Sci. U.S.A.">
        <title>The complete genomic sequence of Nocardia farcinica IFM 10152.</title>
        <authorList>
            <person name="Ishikawa J."/>
            <person name="Yamashita A."/>
            <person name="Mikami Y."/>
            <person name="Hoshino Y."/>
            <person name="Kurita H."/>
            <person name="Hotta K."/>
            <person name="Shiba T."/>
            <person name="Hattori M."/>
        </authorList>
    </citation>
    <scope>NUCLEOTIDE SEQUENCE [LARGE SCALE GENOMIC DNA]</scope>
    <source>
        <strain>IFM 10152</strain>
    </source>
</reference>